<organism>
    <name type="scientific">Chlamydia trachomatis serovar D (strain ATCC VR-885 / DSM 19411 / UW-3/Cx)</name>
    <dbReference type="NCBI Taxonomy" id="272561"/>
    <lineage>
        <taxon>Bacteria</taxon>
        <taxon>Pseudomonadati</taxon>
        <taxon>Chlamydiota</taxon>
        <taxon>Chlamydiia</taxon>
        <taxon>Chlamydiales</taxon>
        <taxon>Chlamydiaceae</taxon>
        <taxon>Chlamydia/Chlamydophila group</taxon>
        <taxon>Chlamydia</taxon>
    </lineage>
</organism>
<accession>O84378</accession>
<reference key="1">
    <citation type="journal article" date="1998" name="Science">
        <title>Genome sequence of an obligate intracellular pathogen of humans: Chlamydia trachomatis.</title>
        <authorList>
            <person name="Stephens R.S."/>
            <person name="Kalman S."/>
            <person name="Lammel C.J."/>
            <person name="Fan J."/>
            <person name="Marathe R."/>
            <person name="Aravind L."/>
            <person name="Mitchell W.P."/>
            <person name="Olinger L."/>
            <person name="Tatusov R.L."/>
            <person name="Zhao Q."/>
            <person name="Koonin E.V."/>
            <person name="Davis R.W."/>
        </authorList>
    </citation>
    <scope>NUCLEOTIDE SEQUENCE [LARGE SCALE GENOMIC DNA]</scope>
    <source>
        <strain>ATCC VR-885 / DSM 19411 / UW-3/Cx</strain>
    </source>
</reference>
<name>AAXB_CHLTR</name>
<keyword id="KW-0963">Cytoplasm</keyword>
<keyword id="KW-0210">Decarboxylase</keyword>
<keyword id="KW-0456">Lyase</keyword>
<keyword id="KW-0670">Pyruvate</keyword>
<keyword id="KW-1185">Reference proteome</keyword>
<keyword id="KW-0843">Virulence</keyword>
<feature type="chain" id="PRO_0000364047" description="Pyruvoyl-dependent arginine decarboxylase subunit beta">
    <location>
        <begin position="1"/>
        <end position="52"/>
    </location>
</feature>
<feature type="chain" id="PRO_0000364048" description="Pyruvoyl-dependent arginine decarboxylase subunit alpha">
    <location>
        <begin position="53"/>
        <end position="195"/>
    </location>
</feature>
<feature type="site" description="Cleavage (non-hydrolytic)" evidence="1">
    <location>
        <begin position="52"/>
        <end position="53"/>
    </location>
</feature>
<feature type="modified residue" description="Pyruvic acid (Ser)" evidence="1">
    <location>
        <position position="53"/>
    </location>
</feature>
<sequence>MPYGTRYPTLAFHTGGVGESDDGMPPQPFETFCYDSALLQAKIENFNIVPYTSVLPKELFGNILPVDQCTKFFKHGAVLEVIMAGRGATVTDGTQAIATGVGICWGKDKNGELIRGWAAEYVEFFPTWIDDEIAESHAKMWLKKSLQHELDLRSISKHSEFQYFHNYINIRKKFGFCLTALGFLNFENAAPAVIQ</sequence>
<evidence type="ECO:0000250" key="1"/>
<evidence type="ECO:0000305" key="2"/>
<gene>
    <name type="primary">aaxB</name>
    <name type="ordered locus">CT_373</name>
</gene>
<dbReference type="EC" id="4.1.1.19"/>
<dbReference type="EMBL" id="AE001273">
    <property type="protein sequence ID" value="AAC67969.1"/>
    <property type="molecule type" value="Genomic_DNA"/>
</dbReference>
<dbReference type="PIR" id="F71523">
    <property type="entry name" value="F71523"/>
</dbReference>
<dbReference type="RefSeq" id="NP_219882.1">
    <property type="nucleotide sequence ID" value="NC_000117.1"/>
</dbReference>
<dbReference type="RefSeq" id="WP_010725175.1">
    <property type="nucleotide sequence ID" value="NC_000117.1"/>
</dbReference>
<dbReference type="SMR" id="O84378"/>
<dbReference type="STRING" id="272561.CT_373"/>
<dbReference type="EnsemblBacteria" id="AAC67969">
    <property type="protein sequence ID" value="AAC67969"/>
    <property type="gene ID" value="CT_373"/>
</dbReference>
<dbReference type="GeneID" id="884742"/>
<dbReference type="KEGG" id="ctr:CT_373"/>
<dbReference type="PATRIC" id="fig|272561.5.peg.402"/>
<dbReference type="HOGENOM" id="CLU_1313366_0_0_0"/>
<dbReference type="InParanoid" id="O84378"/>
<dbReference type="OrthoDB" id="9783061at2"/>
<dbReference type="Proteomes" id="UP000000431">
    <property type="component" value="Chromosome"/>
</dbReference>
<dbReference type="GO" id="GO:0005737">
    <property type="term" value="C:cytoplasm"/>
    <property type="evidence" value="ECO:0007669"/>
    <property type="project" value="UniProtKB-SubCell"/>
</dbReference>
<dbReference type="GO" id="GO:0008792">
    <property type="term" value="F:arginine decarboxylase activity"/>
    <property type="evidence" value="ECO:0007669"/>
    <property type="project" value="UniProtKB-EC"/>
</dbReference>
<dbReference type="GO" id="GO:0006527">
    <property type="term" value="P:arginine catabolic process"/>
    <property type="evidence" value="ECO:0007669"/>
    <property type="project" value="InterPro"/>
</dbReference>
<dbReference type="Gene3D" id="3.50.20.10">
    <property type="entry name" value="Pyruvoyl-Dependent Histidine Decarboxylase, subunit B"/>
    <property type="match status" value="1"/>
</dbReference>
<dbReference type="InterPro" id="IPR016104">
    <property type="entry name" value="Pyr-dep_his/arg-deCO2ase"/>
</dbReference>
<dbReference type="InterPro" id="IPR016105">
    <property type="entry name" value="Pyr-dep_his/arg-deCO2ase_sand"/>
</dbReference>
<dbReference type="InterPro" id="IPR002724">
    <property type="entry name" value="Pyruvoyl-dep_arg_deCO2ase"/>
</dbReference>
<dbReference type="PANTHER" id="PTHR40438">
    <property type="entry name" value="PYRUVOYL-DEPENDENT ARGININE DECARBOXYLASE"/>
    <property type="match status" value="1"/>
</dbReference>
<dbReference type="PANTHER" id="PTHR40438:SF1">
    <property type="entry name" value="PYRUVOYL-DEPENDENT ARGININE DECARBOXYLASE"/>
    <property type="match status" value="1"/>
</dbReference>
<dbReference type="Pfam" id="PF01862">
    <property type="entry name" value="PvlArgDC"/>
    <property type="match status" value="1"/>
</dbReference>
<dbReference type="SFLD" id="SFLDG01170">
    <property type="entry name" value="Pyruvoyl-dependent_arginine_de"/>
    <property type="match status" value="1"/>
</dbReference>
<dbReference type="SUPFAM" id="SSF56271">
    <property type="entry name" value="Pyruvoyl-dependent histidine and arginine decarboxylases"/>
    <property type="match status" value="1"/>
</dbReference>
<protein>
    <recommendedName>
        <fullName>Pyruvoyl-dependent arginine decarboxylase AaxB</fullName>
        <shortName>PvlArgDC</shortName>
        <ecNumber>4.1.1.19</ecNumber>
    </recommendedName>
    <alternativeName>
        <fullName>Biodegradative arginine decarboxylase</fullName>
    </alternativeName>
    <component>
        <recommendedName>
            <fullName>Pyruvoyl-dependent arginine decarboxylase subunit beta</fullName>
        </recommendedName>
    </component>
    <component>
        <recommendedName>
            <fullName>Pyruvoyl-dependent arginine decarboxylase subunit alpha</fullName>
        </recommendedName>
    </component>
</protein>
<comment type="function">
    <text evidence="1">Part of the AaxABC system, catalyzes the decarboxylation of L-arginine. The arginine uptake by the bacterium in the macrophage may be a virulence factor against the host innate immune response (By similarity).</text>
</comment>
<comment type="catalytic activity">
    <reaction>
        <text>L-arginine + H(+) = agmatine + CO2</text>
        <dbReference type="Rhea" id="RHEA:17641"/>
        <dbReference type="ChEBI" id="CHEBI:15378"/>
        <dbReference type="ChEBI" id="CHEBI:16526"/>
        <dbReference type="ChEBI" id="CHEBI:32682"/>
        <dbReference type="ChEBI" id="CHEBI:58145"/>
        <dbReference type="EC" id="4.1.1.19"/>
    </reaction>
</comment>
<comment type="cofactor">
    <cofactor evidence="1">
        <name>pyruvate</name>
        <dbReference type="ChEBI" id="CHEBI:15361"/>
    </cofactor>
    <text evidence="1">Binds 1 pyruvoyl group covalently per subunit.</text>
</comment>
<comment type="subunit">
    <text evidence="1">Trimer of an alpha-beta dimer.</text>
</comment>
<comment type="subcellular location">
    <subcellularLocation>
        <location evidence="1">Cytoplasm</location>
    </subcellularLocation>
</comment>
<comment type="similarity">
    <text evidence="2">Belongs to the pyruvoyl-dependent arginine decarboxylase family.</text>
</comment>
<proteinExistence type="inferred from homology"/>